<organism>
    <name type="scientific">Nicotiana tabacum</name>
    <name type="common">Common tobacco</name>
    <dbReference type="NCBI Taxonomy" id="4097"/>
    <lineage>
        <taxon>Eukaryota</taxon>
        <taxon>Viridiplantae</taxon>
        <taxon>Streptophyta</taxon>
        <taxon>Embryophyta</taxon>
        <taxon>Tracheophyta</taxon>
        <taxon>Spermatophyta</taxon>
        <taxon>Magnoliopsida</taxon>
        <taxon>eudicotyledons</taxon>
        <taxon>Gunneridae</taxon>
        <taxon>Pentapetalae</taxon>
        <taxon>asterids</taxon>
        <taxon>lamiids</taxon>
        <taxon>Solanales</taxon>
        <taxon>Solanaceae</taxon>
        <taxon>Nicotianoideae</taxon>
        <taxon>Nicotianeae</taxon>
        <taxon>Nicotiana</taxon>
    </lineage>
</organism>
<protein>
    <recommendedName>
        <fullName>Probable glutathione S-transferase</fullName>
        <ecNumber>2.5.1.18</ecNumber>
    </recommendedName>
    <alternativeName>
        <fullName>Auxin-induced protein PCNT103</fullName>
    </alternativeName>
</protein>
<feature type="chain" id="PRO_0000185868" description="Probable glutathione S-transferase">
    <location>
        <begin position="1"/>
        <end position="223"/>
    </location>
</feature>
<feature type="domain" description="GST N-terminal">
    <location>
        <begin position="2"/>
        <end position="81"/>
    </location>
</feature>
<feature type="domain" description="GST C-terminal">
    <location>
        <begin position="86"/>
        <end position="212"/>
    </location>
</feature>
<feature type="binding site" evidence="1">
    <location>
        <position position="12"/>
    </location>
    <ligand>
        <name>glutathione</name>
        <dbReference type="ChEBI" id="CHEBI:57925"/>
    </ligand>
</feature>
<feature type="binding site" evidence="1">
    <location>
        <position position="39"/>
    </location>
    <ligand>
        <name>glutathione</name>
        <dbReference type="ChEBI" id="CHEBI:57925"/>
    </ligand>
</feature>
<feature type="binding site" evidence="1">
    <location>
        <position position="53"/>
    </location>
    <ligand>
        <name>glutathione</name>
        <dbReference type="ChEBI" id="CHEBI:57925"/>
    </ligand>
</feature>
<feature type="binding site" evidence="1">
    <location>
        <begin position="65"/>
        <end position="66"/>
    </location>
    <ligand>
        <name>glutathione</name>
        <dbReference type="ChEBI" id="CHEBI:57925"/>
    </ligand>
</feature>
<name>GSTX3_TOBAC</name>
<dbReference type="EC" id="2.5.1.18"/>
<dbReference type="EMBL" id="X56263">
    <property type="protein sequence ID" value="CAA39704.1"/>
    <property type="molecule type" value="mRNA"/>
</dbReference>
<dbReference type="PIR" id="S16269">
    <property type="entry name" value="S16269"/>
</dbReference>
<dbReference type="RefSeq" id="NP_001312651.1">
    <property type="nucleotide sequence ID" value="NM_001325722.1"/>
</dbReference>
<dbReference type="SMR" id="Q03664"/>
<dbReference type="PaxDb" id="4097-Q03664"/>
<dbReference type="GeneID" id="107802704"/>
<dbReference type="KEGG" id="nta:107802704"/>
<dbReference type="OMA" id="WKSVFTA"/>
<dbReference type="OrthoDB" id="4951845at2759"/>
<dbReference type="PhylomeDB" id="Q03664"/>
<dbReference type="Proteomes" id="UP000084051">
    <property type="component" value="Unplaced"/>
</dbReference>
<dbReference type="GO" id="GO:0005737">
    <property type="term" value="C:cytoplasm"/>
    <property type="evidence" value="ECO:0000318"/>
    <property type="project" value="GO_Central"/>
</dbReference>
<dbReference type="GO" id="GO:0004364">
    <property type="term" value="F:glutathione transferase activity"/>
    <property type="evidence" value="ECO:0000318"/>
    <property type="project" value="GO_Central"/>
</dbReference>
<dbReference type="GO" id="GO:0009734">
    <property type="term" value="P:auxin-activated signaling pathway"/>
    <property type="evidence" value="ECO:0007669"/>
    <property type="project" value="UniProtKB-KW"/>
</dbReference>
<dbReference type="GO" id="GO:0006749">
    <property type="term" value="P:glutathione metabolic process"/>
    <property type="evidence" value="ECO:0000318"/>
    <property type="project" value="GO_Central"/>
</dbReference>
<dbReference type="CDD" id="cd03185">
    <property type="entry name" value="GST_C_Tau"/>
    <property type="match status" value="1"/>
</dbReference>
<dbReference type="CDD" id="cd03058">
    <property type="entry name" value="GST_N_Tau"/>
    <property type="match status" value="1"/>
</dbReference>
<dbReference type="FunFam" id="1.20.1050.10:FF:000012">
    <property type="entry name" value="Tau class glutathione S-transferase"/>
    <property type="match status" value="1"/>
</dbReference>
<dbReference type="FunFam" id="3.40.30.10:FF:000014">
    <property type="entry name" value="Tau class glutathione S-transferase"/>
    <property type="match status" value="1"/>
</dbReference>
<dbReference type="Gene3D" id="1.20.1050.10">
    <property type="match status" value="1"/>
</dbReference>
<dbReference type="Gene3D" id="3.40.30.10">
    <property type="entry name" value="Glutaredoxin"/>
    <property type="match status" value="1"/>
</dbReference>
<dbReference type="InterPro" id="IPR010987">
    <property type="entry name" value="Glutathione-S-Trfase_C-like"/>
</dbReference>
<dbReference type="InterPro" id="IPR036282">
    <property type="entry name" value="Glutathione-S-Trfase_C_sf"/>
</dbReference>
<dbReference type="InterPro" id="IPR004045">
    <property type="entry name" value="Glutathione_S-Trfase_N"/>
</dbReference>
<dbReference type="InterPro" id="IPR004046">
    <property type="entry name" value="GST_C"/>
</dbReference>
<dbReference type="InterPro" id="IPR045074">
    <property type="entry name" value="GST_C_Tau"/>
</dbReference>
<dbReference type="InterPro" id="IPR045073">
    <property type="entry name" value="Omega/Tau-like"/>
</dbReference>
<dbReference type="InterPro" id="IPR036249">
    <property type="entry name" value="Thioredoxin-like_sf"/>
</dbReference>
<dbReference type="PANTHER" id="PTHR11260">
    <property type="entry name" value="GLUTATHIONE S-TRANSFERASE, GST, SUPERFAMILY, GST DOMAIN CONTAINING"/>
    <property type="match status" value="1"/>
</dbReference>
<dbReference type="PANTHER" id="PTHR11260:SF610">
    <property type="entry name" value="GLUTATHIONE S-TRANSFERASE-RELATED"/>
    <property type="match status" value="1"/>
</dbReference>
<dbReference type="Pfam" id="PF00043">
    <property type="entry name" value="GST_C"/>
    <property type="match status" value="1"/>
</dbReference>
<dbReference type="Pfam" id="PF02798">
    <property type="entry name" value="GST_N"/>
    <property type="match status" value="1"/>
</dbReference>
<dbReference type="SFLD" id="SFLDG01152">
    <property type="entry name" value="Main.3:_Omega-_and_Tau-like"/>
    <property type="match status" value="1"/>
</dbReference>
<dbReference type="SFLD" id="SFLDG00358">
    <property type="entry name" value="Main_(cytGST)"/>
    <property type="match status" value="1"/>
</dbReference>
<dbReference type="SUPFAM" id="SSF47616">
    <property type="entry name" value="GST C-terminal domain-like"/>
    <property type="match status" value="1"/>
</dbReference>
<dbReference type="SUPFAM" id="SSF52833">
    <property type="entry name" value="Thioredoxin-like"/>
    <property type="match status" value="1"/>
</dbReference>
<dbReference type="PROSITE" id="PS50405">
    <property type="entry name" value="GST_CTER"/>
    <property type="match status" value="1"/>
</dbReference>
<dbReference type="PROSITE" id="PS50404">
    <property type="entry name" value="GST_NTER"/>
    <property type="match status" value="1"/>
</dbReference>
<comment type="catalytic activity">
    <reaction>
        <text>RX + glutathione = an S-substituted glutathione + a halide anion + H(+)</text>
        <dbReference type="Rhea" id="RHEA:16437"/>
        <dbReference type="ChEBI" id="CHEBI:15378"/>
        <dbReference type="ChEBI" id="CHEBI:16042"/>
        <dbReference type="ChEBI" id="CHEBI:17792"/>
        <dbReference type="ChEBI" id="CHEBI:57925"/>
        <dbReference type="ChEBI" id="CHEBI:90779"/>
        <dbReference type="EC" id="2.5.1.18"/>
    </reaction>
</comment>
<comment type="tissue specificity">
    <text>Root tip-specific expression.</text>
</comment>
<comment type="induction">
    <text>By auxin.</text>
</comment>
<comment type="similarity">
    <text evidence="2">Belongs to the GST superfamily. HSP26 family.</text>
</comment>
<reference key="1">
    <citation type="journal article" date="1991" name="Plant Mol. Biol.">
        <title>Promoters of auxin-induced genes from tobacco can lead to auxin-inducible and root tip-specific expression.</title>
        <authorList>
            <person name="van der Zaal E.J."/>
            <person name="Droog F.N.J."/>
            <person name="Boot C.J.M."/>
            <person name="Hensgens L.A.M."/>
            <person name="Hoge J.H.C."/>
            <person name="Schilperoort R.A."/>
            <person name="Libbenga K.R."/>
        </authorList>
    </citation>
    <scope>NUCLEOTIDE SEQUENCE [MRNA]</scope>
    <source>
        <strain>cv. White Burley</strain>
    </source>
</reference>
<accession>Q03664</accession>
<keyword id="KW-0927">Auxin signaling pathway</keyword>
<keyword id="KW-1185">Reference proteome</keyword>
<keyword id="KW-0808">Transferase</keyword>
<proteinExistence type="evidence at transcript level"/>
<evidence type="ECO:0000250" key="1"/>
<evidence type="ECO:0000305" key="2"/>
<sequence length="223" mass="25748">MAEVKLLGFWYSPFTHRVEWALKLKGVKYEYIEEDRDNKSSLLLQSNPVHKKVPVLIHNGKPIVESMVILEYIDETFEGPSILPKDPYDRALARFWSKFLGDKVAAVVNTFFRKGEEQEKGKEEVYEMLKVLDNELKDKKFFVGDKFGFADIAANLVGFWLGVFEEGYGVVLVTSEKFPNFSRWRDEYINCSQVKESLPSRDELLAFFRARFQAVVASISAPK</sequence>